<keyword id="KW-0433">Leucine-rich repeat</keyword>
<keyword id="KW-1185">Reference proteome</keyword>
<keyword id="KW-0677">Repeat</keyword>
<organism>
    <name type="scientific">Arabidopsis thaliana</name>
    <name type="common">Mouse-ear cress</name>
    <dbReference type="NCBI Taxonomy" id="3702"/>
    <lineage>
        <taxon>Eukaryota</taxon>
        <taxon>Viridiplantae</taxon>
        <taxon>Streptophyta</taxon>
        <taxon>Embryophyta</taxon>
        <taxon>Tracheophyta</taxon>
        <taxon>Spermatophyta</taxon>
        <taxon>Magnoliopsida</taxon>
        <taxon>eudicotyledons</taxon>
        <taxon>Gunneridae</taxon>
        <taxon>Pentapetalae</taxon>
        <taxon>rosids</taxon>
        <taxon>malvids</taxon>
        <taxon>Brassicales</taxon>
        <taxon>Brassicaceae</taxon>
        <taxon>Camelineae</taxon>
        <taxon>Arabidopsis</taxon>
    </lineage>
</organism>
<dbReference type="EMBL" id="AP000602">
    <property type="protein sequence ID" value="BAB01185.1"/>
    <property type="status" value="ALT_SEQ"/>
    <property type="molecule type" value="Genomic_DNA"/>
</dbReference>
<dbReference type="EMBL" id="CP002686">
    <property type="protein sequence ID" value="AEE77242.1"/>
    <property type="molecule type" value="Genomic_DNA"/>
</dbReference>
<dbReference type="EMBL" id="CP002686">
    <property type="protein sequence ID" value="ANM64272.1"/>
    <property type="molecule type" value="Genomic_DNA"/>
</dbReference>
<dbReference type="RefSeq" id="NP_001154649.1">
    <property type="nucleotide sequence ID" value="NM_001161177.2"/>
</dbReference>
<dbReference type="RefSeq" id="NP_001326312.1">
    <property type="nucleotide sequence ID" value="NM_001338841.1"/>
</dbReference>
<dbReference type="FunCoup" id="Q9LJF8">
    <property type="interactions" value="189"/>
</dbReference>
<dbReference type="STRING" id="3702.Q9LJF8"/>
<dbReference type="iPTMnet" id="Q9LJF8"/>
<dbReference type="PaxDb" id="3702-AT3G26922.1"/>
<dbReference type="EnsemblPlants" id="AT3G26922.1">
    <property type="protein sequence ID" value="AT3G26922.1"/>
    <property type="gene ID" value="AT3G26922"/>
</dbReference>
<dbReference type="EnsemblPlants" id="AT3G26922.2">
    <property type="protein sequence ID" value="AT3G26922.2"/>
    <property type="gene ID" value="AT3G26922"/>
</dbReference>
<dbReference type="GeneID" id="7922367"/>
<dbReference type="Gramene" id="AT3G26922.1">
    <property type="protein sequence ID" value="AT3G26922.1"/>
    <property type="gene ID" value="AT3G26922"/>
</dbReference>
<dbReference type="Gramene" id="AT3G26922.2">
    <property type="protein sequence ID" value="AT3G26922.2"/>
    <property type="gene ID" value="AT3G26922"/>
</dbReference>
<dbReference type="KEGG" id="ath:AT3G26922"/>
<dbReference type="Araport" id="AT3G26922"/>
<dbReference type="TAIR" id="AT3G26922"/>
<dbReference type="HOGENOM" id="CLU_010721_1_1_1"/>
<dbReference type="InParanoid" id="Q9LJF8"/>
<dbReference type="OMA" id="NEDMISH"/>
<dbReference type="PhylomeDB" id="Q9LJF8"/>
<dbReference type="PRO" id="PR:Q9LJF8"/>
<dbReference type="Proteomes" id="UP000006548">
    <property type="component" value="Chromosome 3"/>
</dbReference>
<dbReference type="ExpressionAtlas" id="Q9LJF8">
    <property type="expression patterns" value="baseline and differential"/>
</dbReference>
<dbReference type="CDD" id="cd22160">
    <property type="entry name" value="F-box_AtFBL13-like"/>
    <property type="match status" value="1"/>
</dbReference>
<dbReference type="Gene3D" id="1.20.1280.50">
    <property type="match status" value="1"/>
</dbReference>
<dbReference type="Gene3D" id="3.80.10.10">
    <property type="entry name" value="Ribonuclease Inhibitor"/>
    <property type="match status" value="1"/>
</dbReference>
<dbReference type="InterPro" id="IPR036047">
    <property type="entry name" value="F-box-like_dom_sf"/>
</dbReference>
<dbReference type="InterPro" id="IPR053781">
    <property type="entry name" value="F-box_AtFBL13-like"/>
</dbReference>
<dbReference type="InterPro" id="IPR001810">
    <property type="entry name" value="F-box_dom"/>
</dbReference>
<dbReference type="InterPro" id="IPR050232">
    <property type="entry name" value="FBL13/AtMIF1-like"/>
</dbReference>
<dbReference type="InterPro" id="IPR032675">
    <property type="entry name" value="LRR_dom_sf"/>
</dbReference>
<dbReference type="InterPro" id="IPR055411">
    <property type="entry name" value="LRR_FXL15/At3g58940/PEG3-like"/>
</dbReference>
<dbReference type="PANTHER" id="PTHR31900:SF34">
    <property type="entry name" value="EMB|CAB62440.1-RELATED"/>
    <property type="match status" value="1"/>
</dbReference>
<dbReference type="PANTHER" id="PTHR31900">
    <property type="entry name" value="F-BOX/RNI SUPERFAMILY PROTEIN-RELATED"/>
    <property type="match status" value="1"/>
</dbReference>
<dbReference type="Pfam" id="PF00646">
    <property type="entry name" value="F-box"/>
    <property type="match status" value="1"/>
</dbReference>
<dbReference type="Pfam" id="PF24758">
    <property type="entry name" value="LRR_At5g56370"/>
    <property type="match status" value="1"/>
</dbReference>
<dbReference type="SUPFAM" id="SSF81383">
    <property type="entry name" value="F-box domain"/>
    <property type="match status" value="1"/>
</dbReference>
<dbReference type="SUPFAM" id="SSF52047">
    <property type="entry name" value="RNI-like"/>
    <property type="match status" value="1"/>
</dbReference>
<dbReference type="PROSITE" id="PS50181">
    <property type="entry name" value="FBOX"/>
    <property type="match status" value="1"/>
</dbReference>
<accession>Q9LJF8</accession>
<name>FBL47_ARATH</name>
<protein>
    <recommendedName>
        <fullName>F-box/LRR-repeat protein At3g26922</fullName>
    </recommendedName>
</protein>
<proteinExistence type="evidence at transcript level"/>
<comment type="sequence caution" evidence="2">
    <conflict type="erroneous gene model prediction">
        <sequence resource="EMBL-CDS" id="BAB01185"/>
    </conflict>
</comment>
<reference key="1">
    <citation type="journal article" date="2000" name="DNA Res.">
        <title>Structural analysis of Arabidopsis thaliana chromosome 3. II. Sequence features of the 4,251,695 bp regions covered by 90 P1, TAC and BAC clones.</title>
        <authorList>
            <person name="Kaneko T."/>
            <person name="Katoh T."/>
            <person name="Sato S."/>
            <person name="Nakamura Y."/>
            <person name="Asamizu E."/>
            <person name="Tabata S."/>
        </authorList>
    </citation>
    <scope>NUCLEOTIDE SEQUENCE [LARGE SCALE GENOMIC DNA]</scope>
    <source>
        <strain>cv. Columbia</strain>
    </source>
</reference>
<reference key="2">
    <citation type="journal article" date="2017" name="Plant J.">
        <title>Araport11: a complete reannotation of the Arabidopsis thaliana reference genome.</title>
        <authorList>
            <person name="Cheng C.Y."/>
            <person name="Krishnakumar V."/>
            <person name="Chan A.P."/>
            <person name="Thibaud-Nissen F."/>
            <person name="Schobel S."/>
            <person name="Town C.D."/>
        </authorList>
    </citation>
    <scope>GENOME REANNOTATION</scope>
    <source>
        <strain>cv. Columbia</strain>
    </source>
</reference>
<gene>
    <name type="ordered locus">At3g26922</name>
    <name type="ORF">MQP17.2</name>
</gene>
<evidence type="ECO:0000255" key="1">
    <source>
        <dbReference type="PROSITE-ProRule" id="PRU00080"/>
    </source>
</evidence>
<evidence type="ECO:0000305" key="2"/>
<sequence>MKRCLRNGNGVNEDRISDLPEALLLQILSMLPVKDVVTTSVLSKPWRSLWKLVPTLKFDYENNQSEDETYSEIVCRLLLSNKAPFLESLHLGFRFGECRSVEVGMWIGIAYARHVRDLVLHVESVKGSFIFPTGLYNCETLESLTLRSWVLVDVPSPACLKSLRTLRLENVDYKYDDSVYNLLSGCPNLENLVVYRGNLLEVETFTIAVPSLQRLTIYDDNDGEYCTGYVINAPSLKYLKIDGFKALESCLIENAPELVEATIMNVSKIINEKLLETLTSVKRLSLALSPLELKFSCNNYSGHLLL</sequence>
<feature type="chain" id="PRO_0000281948" description="F-box/LRR-repeat protein At3g26922">
    <location>
        <begin position="1"/>
        <end position="306"/>
    </location>
</feature>
<feature type="domain" description="F-box" evidence="1">
    <location>
        <begin position="13"/>
        <end position="73"/>
    </location>
</feature>
<feature type="repeat" description="LRR 1">
    <location>
        <begin position="67"/>
        <end position="93"/>
    </location>
</feature>
<feature type="repeat" description="LRR 2">
    <location>
        <begin position="98"/>
        <end position="122"/>
    </location>
</feature>
<feature type="repeat" description="LRR 3">
    <location>
        <begin position="138"/>
        <end position="170"/>
    </location>
</feature>
<feature type="repeat" description="LRR 4">
    <location>
        <begin position="171"/>
        <end position="196"/>
    </location>
</feature>
<feature type="repeat" description="LRR 5">
    <location>
        <begin position="215"/>
        <end position="243"/>
    </location>
</feature>
<feature type="repeat" description="LRR 6">
    <location>
        <begin position="263"/>
        <end position="288"/>
    </location>
</feature>